<organism>
    <name type="scientific">Riftia pachyptila</name>
    <name type="common">Vent tube worm</name>
    <dbReference type="NCBI Taxonomy" id="6426"/>
    <lineage>
        <taxon>Eukaryota</taxon>
        <taxon>Metazoa</taxon>
        <taxon>Spiralia</taxon>
        <taxon>Lophotrochozoa</taxon>
        <taxon>Annelida</taxon>
        <taxon>Polychaeta</taxon>
        <taxon>Sedentaria</taxon>
        <taxon>Canalipalpata</taxon>
        <taxon>Sabellida</taxon>
        <taxon>Siboglinidae</taxon>
        <taxon>Riftia</taxon>
    </lineage>
</organism>
<evidence type="ECO:0000255" key="1"/>
<evidence type="ECO:0000255" key="2">
    <source>
        <dbReference type="PROSITE-ProRule" id="PRU00059"/>
    </source>
</evidence>
<evidence type="ECO:0000269" key="3">
    <source>
    </source>
</evidence>
<evidence type="ECO:0000305" key="4"/>
<evidence type="ECO:0000312" key="5">
    <source>
        <dbReference type="EMBL" id="AAF37867.1"/>
    </source>
</evidence>
<name>RP43_RIFPA</name>
<keyword id="KW-0903">Direct protein sequencing</keyword>
<keyword id="KW-1015">Disulfide bond</keyword>
<keyword id="KW-0677">Repeat</keyword>
<keyword id="KW-0732">Signal</keyword>
<accession>Q9NH13</accession>
<comment type="function">
    <text evidence="3">May play a role in protein-protein interactions during tube assembly.</text>
</comment>
<comment type="tissue specificity">
    <text evidence="3">Detected in vestimentum and trunk but not in opisthosome or obturaculum. In the vestimentum, expression is restricted to epithelial cells under apical cuticular plaques.</text>
</comment>
<proteinExistence type="evidence at protein level"/>
<dbReference type="EMBL" id="AF233595">
    <property type="protein sequence ID" value="AAF37867.1"/>
    <property type="molecule type" value="mRNA"/>
</dbReference>
<dbReference type="SMR" id="Q9NH13"/>
<dbReference type="GO" id="GO:0006033">
    <property type="term" value="P:chitin localization"/>
    <property type="evidence" value="ECO:0000303"/>
    <property type="project" value="UniProtKB"/>
</dbReference>
<dbReference type="GO" id="GO:0030198">
    <property type="term" value="P:extracellular matrix organization"/>
    <property type="evidence" value="ECO:0000303"/>
    <property type="project" value="UniProtKB"/>
</dbReference>
<dbReference type="CDD" id="cd00041">
    <property type="entry name" value="CUB"/>
    <property type="match status" value="3"/>
</dbReference>
<dbReference type="FunFam" id="2.60.120.290:FF:000013">
    <property type="entry name" value="Membrane frizzled-related protein"/>
    <property type="match status" value="1"/>
</dbReference>
<dbReference type="FunFam" id="2.60.120.290:FF:000005">
    <property type="entry name" value="Procollagen C-endopeptidase enhancer 1"/>
    <property type="match status" value="2"/>
</dbReference>
<dbReference type="Gene3D" id="2.60.120.290">
    <property type="entry name" value="Spermadhesin, CUB domain"/>
    <property type="match status" value="3"/>
</dbReference>
<dbReference type="InterPro" id="IPR000859">
    <property type="entry name" value="CUB_dom"/>
</dbReference>
<dbReference type="InterPro" id="IPR035914">
    <property type="entry name" value="Sperma_CUB_dom_sf"/>
</dbReference>
<dbReference type="PANTHER" id="PTHR24251:SF37">
    <property type="entry name" value="CUB DOMAIN-CONTAINING PROTEIN"/>
    <property type="match status" value="1"/>
</dbReference>
<dbReference type="PANTHER" id="PTHR24251">
    <property type="entry name" value="OVOCHYMASE-RELATED"/>
    <property type="match status" value="1"/>
</dbReference>
<dbReference type="Pfam" id="PF00431">
    <property type="entry name" value="CUB"/>
    <property type="match status" value="3"/>
</dbReference>
<dbReference type="SMART" id="SM00042">
    <property type="entry name" value="CUB"/>
    <property type="match status" value="3"/>
</dbReference>
<dbReference type="SUPFAM" id="SSF49854">
    <property type="entry name" value="Spermadhesin, CUB domain"/>
    <property type="match status" value="3"/>
</dbReference>
<dbReference type="PROSITE" id="PS01180">
    <property type="entry name" value="CUB"/>
    <property type="match status" value="3"/>
</dbReference>
<reference evidence="4 5" key="1">
    <citation type="journal article" date="2000" name="Biochem. J.">
        <title>Characterization of a cDNA encoding RP43, a CUB-domain-containing protein from the tube of Riftia pachyptila (Vestimentifera), and distribution of its transcript.</title>
        <authorList>
            <person name="Chamoy L."/>
            <person name="Nicolai M."/>
            <person name="Quennedey B."/>
            <person name="Gaill F."/>
            <person name="Delachambre J."/>
        </authorList>
    </citation>
    <scope>NUCLEOTIDE SEQUENCE [MRNA]</scope>
    <scope>PROTEIN SEQUENCE OF 29-41; 108-115; 158-172; 305-323 AND 413-420</scope>
    <scope>TISSUE SPECIFICITY</scope>
</reference>
<protein>
    <recommendedName>
        <fullName>Exoskeleton protein RP43</fullName>
    </recommendedName>
</protein>
<sequence>MRVIFVISLVSFMFVTWQTNPVHCRQHKTPQVVDLGYSGAKVETVMKTSDVVYAKPMCHGGRCPPPPPTKTCSKPSSLKAVSRAGHAGYFGTIGSGKYKNNENCWWSIQAPADQRLRLHFESLYLEYGNRYCPYDYVNIHNGKNENGQRLGKYCGIKAPDDIITTGNSAYVRFSTDSSVTKYGFRLRYSIVSCNSLHTIFGSHGEFGTVGPAYGNFEECSWKIEVPNGKRVRLHFKRFHLENNNKYCPYDKLKIYDGSSASASLKGTLCGKRRPKDIESTGKTMFVTFSSDISLTFPGFRIQYSVPASCSVVNELTGPSGTFGTTGSQYENNEVCSWKIEVAQNKRVLLHIYRFNIEVEANCEYDSLTVYKGPNDSAPMLGKYCGETIPTFMVSSGNTMFIKFQTDGSARKPGFWIGYTTG</sequence>
<feature type="signal peptide" evidence="1">
    <location>
        <begin position="1"/>
        <end position="24"/>
    </location>
</feature>
<feature type="chain" id="PRO_0000233939" description="Exoskeleton protein RP43" evidence="1">
    <location>
        <begin position="25"/>
        <end position="421"/>
    </location>
</feature>
<feature type="domain" description="CUB 1" evidence="2">
    <location>
        <begin position="72"/>
        <end position="191"/>
    </location>
</feature>
<feature type="domain" description="CUB 2" evidence="2">
    <location>
        <begin position="193"/>
        <end position="306"/>
    </location>
</feature>
<feature type="domain" description="CUB 3" evidence="2">
    <location>
        <begin position="309"/>
        <end position="421"/>
    </location>
</feature>
<feature type="disulfide bond" evidence="2">
    <location>
        <begin position="72"/>
        <end position="104"/>
    </location>
</feature>
<feature type="disulfide bond" evidence="2">
    <location>
        <begin position="132"/>
        <end position="154"/>
    </location>
</feature>
<feature type="disulfide bond" evidence="2">
    <location>
        <begin position="193"/>
        <end position="219"/>
    </location>
</feature>
<feature type="disulfide bond" evidence="2">
    <location>
        <begin position="247"/>
        <end position="269"/>
    </location>
</feature>
<feature type="disulfide bond" evidence="2">
    <location>
        <begin position="309"/>
        <end position="335"/>
    </location>
</feature>
<feature type="disulfide bond" evidence="2">
    <location>
        <begin position="362"/>
        <end position="384"/>
    </location>
</feature>